<name>TRI10_MOUSE</name>
<sequence length="489" mass="55630">MASAPSVTSLADEVNCPICQGTLREPVTIDCGHNFCRGCLTRYCEIPGPESEESLSCPLCKEPFRPGSFRPNWQLANVVENIERLQLASTRGLEVEDACPEHGEKIYFFCEEDEAQLCVVCRETGQHGAHTVRFLEDAAGPYREQIQKCLVCLRKEREEIQETQSRENKRIQVLLTQVATKRQQVISQFAHLSQFLQQQQTALLAQLEGLDGDILKQQEEFDSLATGEICRFSTLIEELEEKNKRTARGLLTDIRSTLIRCETRKCRKPEAISPELGQRIRDFPQQAIPLRQEMKTFLEKLCFELDYEPAHISLDPQTSHPKLLLSEDHRRARFSYKWQNSPDTPQRFDRVTCVLAQCGFTGGRHTWMVNVDLAHGGSCTVGVVREDVRRKGELRLRPEEGIWAVRLAWGFVSALGSFPTRLALEEQPRKVQVSLDYEVGWITFVNAVTQEHIYTFTASFTQKIFPLFGLWGRGSSFSLSCQEGAVSLL</sequence>
<organism>
    <name type="scientific">Mus musculus</name>
    <name type="common">Mouse</name>
    <dbReference type="NCBI Taxonomy" id="10090"/>
    <lineage>
        <taxon>Eukaryota</taxon>
        <taxon>Metazoa</taxon>
        <taxon>Chordata</taxon>
        <taxon>Craniata</taxon>
        <taxon>Vertebrata</taxon>
        <taxon>Euteleostomi</taxon>
        <taxon>Mammalia</taxon>
        <taxon>Eutheria</taxon>
        <taxon>Euarchontoglires</taxon>
        <taxon>Glires</taxon>
        <taxon>Rodentia</taxon>
        <taxon>Myomorpha</taxon>
        <taxon>Muroidea</taxon>
        <taxon>Muridae</taxon>
        <taxon>Murinae</taxon>
        <taxon>Mus</taxon>
        <taxon>Mus</taxon>
    </lineage>
</organism>
<dbReference type="EMBL" id="AF134811">
    <property type="protein sequence ID" value="AAD28534.1"/>
    <property type="molecule type" value="mRNA"/>
</dbReference>
<dbReference type="EMBL" id="AF220121">
    <property type="protein sequence ID" value="AAG53494.1"/>
    <property type="molecule type" value="mRNA"/>
</dbReference>
<dbReference type="EMBL" id="AK011082">
    <property type="protein sequence ID" value="BAB27386.1"/>
    <property type="molecule type" value="mRNA"/>
</dbReference>
<dbReference type="EMBL" id="BC051632">
    <property type="protein sequence ID" value="AAH51632.1"/>
    <property type="molecule type" value="mRNA"/>
</dbReference>
<dbReference type="CCDS" id="CCDS37614.1"/>
<dbReference type="RefSeq" id="NP_035410.2">
    <property type="nucleotide sequence ID" value="NM_011280.2"/>
</dbReference>
<dbReference type="SMR" id="Q9WUH5"/>
<dbReference type="FunCoup" id="Q9WUH5">
    <property type="interactions" value="170"/>
</dbReference>
<dbReference type="STRING" id="10090.ENSMUSP00000057928"/>
<dbReference type="iPTMnet" id="Q9WUH5"/>
<dbReference type="PhosphoSitePlus" id="Q9WUH5"/>
<dbReference type="PaxDb" id="10090-ENSMUSP00000057928"/>
<dbReference type="ProteomicsDB" id="259089"/>
<dbReference type="Antibodypedia" id="26232">
    <property type="antibodies" value="170 antibodies from 19 providers"/>
</dbReference>
<dbReference type="DNASU" id="19824"/>
<dbReference type="Ensembl" id="ENSMUST00000060524.11">
    <property type="protein sequence ID" value="ENSMUSP00000057928.10"/>
    <property type="gene ID" value="ENSMUSG00000073400.7"/>
</dbReference>
<dbReference type="GeneID" id="19824"/>
<dbReference type="KEGG" id="mmu:19824"/>
<dbReference type="UCSC" id="uc008clj.2">
    <property type="organism name" value="mouse"/>
</dbReference>
<dbReference type="AGR" id="MGI:1338757"/>
<dbReference type="CTD" id="10107"/>
<dbReference type="MGI" id="MGI:1338757">
    <property type="gene designation" value="Trim10"/>
</dbReference>
<dbReference type="VEuPathDB" id="HostDB:ENSMUSG00000073400"/>
<dbReference type="eggNOG" id="KOG2177">
    <property type="taxonomic scope" value="Eukaryota"/>
</dbReference>
<dbReference type="GeneTree" id="ENSGT00940000161525"/>
<dbReference type="HOGENOM" id="CLU_013137_0_3_1"/>
<dbReference type="InParanoid" id="Q9WUH5"/>
<dbReference type="OMA" id="LRCETRK"/>
<dbReference type="OrthoDB" id="9410880at2759"/>
<dbReference type="PhylomeDB" id="Q9WUH5"/>
<dbReference type="TreeFam" id="TF342569"/>
<dbReference type="BioGRID-ORCS" id="19824">
    <property type="hits" value="2 hits in 78 CRISPR screens"/>
</dbReference>
<dbReference type="ChiTaRS" id="Trim10">
    <property type="organism name" value="mouse"/>
</dbReference>
<dbReference type="PRO" id="PR:Q9WUH5"/>
<dbReference type="Proteomes" id="UP000000589">
    <property type="component" value="Chromosome 17"/>
</dbReference>
<dbReference type="RNAct" id="Q9WUH5">
    <property type="molecule type" value="protein"/>
</dbReference>
<dbReference type="Bgee" id="ENSMUSG00000073400">
    <property type="expression patterns" value="Expressed in fetal liver hematopoietic progenitor cell and 93 other cell types or tissues"/>
</dbReference>
<dbReference type="GO" id="GO:0005737">
    <property type="term" value="C:cytoplasm"/>
    <property type="evidence" value="ECO:0000314"/>
    <property type="project" value="MGI"/>
</dbReference>
<dbReference type="GO" id="GO:0008270">
    <property type="term" value="F:zinc ion binding"/>
    <property type="evidence" value="ECO:0007669"/>
    <property type="project" value="UniProtKB-KW"/>
</dbReference>
<dbReference type="GO" id="GO:0030218">
    <property type="term" value="P:erythrocyte differentiation"/>
    <property type="evidence" value="ECO:0000314"/>
    <property type="project" value="MGI"/>
</dbReference>
<dbReference type="GO" id="GO:0046597">
    <property type="term" value="P:host-mediated suppression of symbiont invasion"/>
    <property type="evidence" value="ECO:0000314"/>
    <property type="project" value="UniProtKB"/>
</dbReference>
<dbReference type="GO" id="GO:0045087">
    <property type="term" value="P:innate immune response"/>
    <property type="evidence" value="ECO:0000314"/>
    <property type="project" value="UniProtKB"/>
</dbReference>
<dbReference type="CDD" id="cd15827">
    <property type="entry name" value="SPRY_PRY_TRIM10"/>
    <property type="match status" value="1"/>
</dbReference>
<dbReference type="FunFam" id="3.30.40.10:FF:000248">
    <property type="entry name" value="E3 ubiquitin-protein ligase TRIM68"/>
    <property type="match status" value="1"/>
</dbReference>
<dbReference type="FunFam" id="2.60.120.920:FF:000044">
    <property type="entry name" value="Tripartite motif-containing protein 10"/>
    <property type="match status" value="1"/>
</dbReference>
<dbReference type="Gene3D" id="2.60.120.920">
    <property type="match status" value="1"/>
</dbReference>
<dbReference type="Gene3D" id="3.30.160.60">
    <property type="entry name" value="Classic Zinc Finger"/>
    <property type="match status" value="1"/>
</dbReference>
<dbReference type="Gene3D" id="3.30.40.10">
    <property type="entry name" value="Zinc/RING finger domain, C3HC4 (zinc finger)"/>
    <property type="match status" value="1"/>
</dbReference>
<dbReference type="InterPro" id="IPR001870">
    <property type="entry name" value="B30.2/SPRY"/>
</dbReference>
<dbReference type="InterPro" id="IPR043136">
    <property type="entry name" value="B30.2/SPRY_sf"/>
</dbReference>
<dbReference type="InterPro" id="IPR003879">
    <property type="entry name" value="Butyrophylin_SPRY"/>
</dbReference>
<dbReference type="InterPro" id="IPR013320">
    <property type="entry name" value="ConA-like_dom_sf"/>
</dbReference>
<dbReference type="InterPro" id="IPR006574">
    <property type="entry name" value="PRY"/>
</dbReference>
<dbReference type="InterPro" id="IPR003877">
    <property type="entry name" value="SPRY_dom"/>
</dbReference>
<dbReference type="InterPro" id="IPR050143">
    <property type="entry name" value="TRIM/RBCC"/>
</dbReference>
<dbReference type="InterPro" id="IPR000315">
    <property type="entry name" value="Znf_B-box"/>
</dbReference>
<dbReference type="InterPro" id="IPR001841">
    <property type="entry name" value="Znf_RING"/>
</dbReference>
<dbReference type="InterPro" id="IPR013083">
    <property type="entry name" value="Znf_RING/FYVE/PHD"/>
</dbReference>
<dbReference type="InterPro" id="IPR017907">
    <property type="entry name" value="Znf_RING_CS"/>
</dbReference>
<dbReference type="PANTHER" id="PTHR24103">
    <property type="entry name" value="E3 UBIQUITIN-PROTEIN LIGASE TRIM"/>
    <property type="match status" value="1"/>
</dbReference>
<dbReference type="Pfam" id="PF13765">
    <property type="entry name" value="PRY"/>
    <property type="match status" value="1"/>
</dbReference>
<dbReference type="Pfam" id="PF00622">
    <property type="entry name" value="SPRY"/>
    <property type="match status" value="1"/>
</dbReference>
<dbReference type="Pfam" id="PF00643">
    <property type="entry name" value="zf-B_box"/>
    <property type="match status" value="1"/>
</dbReference>
<dbReference type="Pfam" id="PF15227">
    <property type="entry name" value="zf-C3HC4_4"/>
    <property type="match status" value="1"/>
</dbReference>
<dbReference type="PRINTS" id="PR01407">
    <property type="entry name" value="BUTYPHLNCDUF"/>
</dbReference>
<dbReference type="SMART" id="SM00336">
    <property type="entry name" value="BBOX"/>
    <property type="match status" value="1"/>
</dbReference>
<dbReference type="SMART" id="SM00589">
    <property type="entry name" value="PRY"/>
    <property type="match status" value="1"/>
</dbReference>
<dbReference type="SMART" id="SM00184">
    <property type="entry name" value="RING"/>
    <property type="match status" value="1"/>
</dbReference>
<dbReference type="SMART" id="SM00449">
    <property type="entry name" value="SPRY"/>
    <property type="match status" value="1"/>
</dbReference>
<dbReference type="SUPFAM" id="SSF57845">
    <property type="entry name" value="B-box zinc-binding domain"/>
    <property type="match status" value="1"/>
</dbReference>
<dbReference type="SUPFAM" id="SSF49899">
    <property type="entry name" value="Concanavalin A-like lectins/glucanases"/>
    <property type="match status" value="1"/>
</dbReference>
<dbReference type="SUPFAM" id="SSF57850">
    <property type="entry name" value="RING/U-box"/>
    <property type="match status" value="1"/>
</dbReference>
<dbReference type="PROSITE" id="PS50188">
    <property type="entry name" value="B302_SPRY"/>
    <property type="match status" value="1"/>
</dbReference>
<dbReference type="PROSITE" id="PS50119">
    <property type="entry name" value="ZF_BBOX"/>
    <property type="match status" value="1"/>
</dbReference>
<dbReference type="PROSITE" id="PS00518">
    <property type="entry name" value="ZF_RING_1"/>
    <property type="match status" value="1"/>
</dbReference>
<dbReference type="PROSITE" id="PS50089">
    <property type="entry name" value="ZF_RING_2"/>
    <property type="match status" value="1"/>
</dbReference>
<proteinExistence type="evidence at transcript level"/>
<feature type="chain" id="PRO_0000056212" description="Tripartite motif-containing protein 10">
    <location>
        <begin position="1"/>
        <end position="489"/>
    </location>
</feature>
<feature type="domain" description="B30.2/SPRY" evidence="5">
    <location>
        <begin position="292"/>
        <end position="486"/>
    </location>
</feature>
<feature type="zinc finger region" description="RING-type" evidence="4">
    <location>
        <begin position="16"/>
        <end position="61"/>
    </location>
</feature>
<feature type="zinc finger region" description="B box-type" evidence="3">
    <location>
        <begin position="94"/>
        <end position="135"/>
    </location>
</feature>
<feature type="coiled-coil region" evidence="2">
    <location>
        <begin position="144"/>
        <end position="180"/>
    </location>
</feature>
<feature type="binding site" evidence="3">
    <location>
        <position position="99"/>
    </location>
    <ligand>
        <name>Zn(2+)</name>
        <dbReference type="ChEBI" id="CHEBI:29105"/>
    </ligand>
</feature>
<feature type="binding site" evidence="3">
    <location>
        <position position="102"/>
    </location>
    <ligand>
        <name>Zn(2+)</name>
        <dbReference type="ChEBI" id="CHEBI:29105"/>
    </ligand>
</feature>
<feature type="binding site" evidence="3">
    <location>
        <position position="121"/>
    </location>
    <ligand>
        <name>Zn(2+)</name>
        <dbReference type="ChEBI" id="CHEBI:29105"/>
    </ligand>
</feature>
<feature type="binding site" evidence="3">
    <location>
        <position position="127"/>
    </location>
    <ligand>
        <name>Zn(2+)</name>
        <dbReference type="ChEBI" id="CHEBI:29105"/>
    </ligand>
</feature>
<feature type="sequence conflict" description="In Ref. 1; AAD28534." evidence="9" ref="1">
    <original>R</original>
    <variation>H</variation>
    <location>
        <position position="133"/>
    </location>
</feature>
<feature type="sequence conflict" description="In Ref. 1; AAD28534." evidence="9" ref="1">
    <original>R</original>
    <variation>Q</variation>
    <location>
        <position position="231"/>
    </location>
</feature>
<feature type="sequence conflict" description="In Ref. 1; AAD28534." evidence="9" ref="1">
    <original>H</original>
    <variation>Y</variation>
    <location>
        <position position="365"/>
    </location>
</feature>
<feature type="sequence conflict" description="In Ref. 1 and 4." evidence="9" ref="1 4">
    <original>M</original>
    <variation>V</variation>
    <location>
        <position position="368"/>
    </location>
</feature>
<gene>
    <name type="primary">Trim10</name>
    <name type="synonym">Herf1</name>
    <name type="synonym">Rnf9</name>
</gene>
<accession>Q9WUH5</accession>
<accession>Q80WA9</accession>
<accession>Q9CY03</accession>
<evidence type="ECO:0000250" key="1">
    <source>
        <dbReference type="UniProtKB" id="Q9UDY6"/>
    </source>
</evidence>
<evidence type="ECO:0000255" key="2"/>
<evidence type="ECO:0000255" key="3">
    <source>
        <dbReference type="PROSITE-ProRule" id="PRU00024"/>
    </source>
</evidence>
<evidence type="ECO:0000255" key="4">
    <source>
        <dbReference type="PROSITE-ProRule" id="PRU00175"/>
    </source>
</evidence>
<evidence type="ECO:0000255" key="5">
    <source>
        <dbReference type="PROSITE-ProRule" id="PRU00548"/>
    </source>
</evidence>
<evidence type="ECO:0000269" key="6">
    <source>
    </source>
</evidence>
<evidence type="ECO:0000269" key="7">
    <source>
    </source>
</evidence>
<evidence type="ECO:0000269" key="8">
    <source>
    </source>
</evidence>
<evidence type="ECO:0000305" key="9"/>
<reference key="1">
    <citation type="journal article" date="1999" name="Mol. Cell. Biol.">
        <title>HERF1, a novel hematopoiesis-specific RING finger protein, is required for terminal differentiation of erythroid cells.</title>
        <authorList>
            <person name="Harada H."/>
            <person name="Harada Y."/>
            <person name="O'Brien D.P."/>
            <person name="Rice D.S."/>
            <person name="Naeve C.W."/>
            <person name="Downing J.R."/>
        </authorList>
    </citation>
    <scope>NUCLEOTIDE SEQUENCE [MRNA]</scope>
    <scope>FUNCTION</scope>
    <source>
        <tissue>Spleen</tissue>
    </source>
</reference>
<reference key="2">
    <citation type="journal article" date="2001" name="EMBO J.">
        <title>The tripartite motif family identifies cell compartments.</title>
        <authorList>
            <person name="Reymond A."/>
            <person name="Meroni G."/>
            <person name="Fantozzi A."/>
            <person name="Merla G."/>
            <person name="Cairo S."/>
            <person name="Luzi L."/>
            <person name="Riganelli D."/>
            <person name="Zanaria E."/>
            <person name="Messali S."/>
            <person name="Cainarca S."/>
            <person name="Guffanti A."/>
            <person name="Minucci S."/>
            <person name="Pelicci P.G."/>
            <person name="Ballabio A."/>
        </authorList>
    </citation>
    <scope>NUCLEOTIDE SEQUENCE [MRNA]</scope>
    <scope>TISSUE SPECIFICITY</scope>
</reference>
<reference key="3">
    <citation type="journal article" date="2005" name="Science">
        <title>The transcriptional landscape of the mammalian genome.</title>
        <authorList>
            <person name="Carninci P."/>
            <person name="Kasukawa T."/>
            <person name="Katayama S."/>
            <person name="Gough J."/>
            <person name="Frith M.C."/>
            <person name="Maeda N."/>
            <person name="Oyama R."/>
            <person name="Ravasi T."/>
            <person name="Lenhard B."/>
            <person name="Wells C."/>
            <person name="Kodzius R."/>
            <person name="Shimokawa K."/>
            <person name="Bajic V.B."/>
            <person name="Brenner S.E."/>
            <person name="Batalov S."/>
            <person name="Forrest A.R."/>
            <person name="Zavolan M."/>
            <person name="Davis M.J."/>
            <person name="Wilming L.G."/>
            <person name="Aidinis V."/>
            <person name="Allen J.E."/>
            <person name="Ambesi-Impiombato A."/>
            <person name="Apweiler R."/>
            <person name="Aturaliya R.N."/>
            <person name="Bailey T.L."/>
            <person name="Bansal M."/>
            <person name="Baxter L."/>
            <person name="Beisel K.W."/>
            <person name="Bersano T."/>
            <person name="Bono H."/>
            <person name="Chalk A.M."/>
            <person name="Chiu K.P."/>
            <person name="Choudhary V."/>
            <person name="Christoffels A."/>
            <person name="Clutterbuck D.R."/>
            <person name="Crowe M.L."/>
            <person name="Dalla E."/>
            <person name="Dalrymple B.P."/>
            <person name="de Bono B."/>
            <person name="Della Gatta G."/>
            <person name="di Bernardo D."/>
            <person name="Down T."/>
            <person name="Engstrom P."/>
            <person name="Fagiolini M."/>
            <person name="Faulkner G."/>
            <person name="Fletcher C.F."/>
            <person name="Fukushima T."/>
            <person name="Furuno M."/>
            <person name="Futaki S."/>
            <person name="Gariboldi M."/>
            <person name="Georgii-Hemming P."/>
            <person name="Gingeras T.R."/>
            <person name="Gojobori T."/>
            <person name="Green R.E."/>
            <person name="Gustincich S."/>
            <person name="Harbers M."/>
            <person name="Hayashi Y."/>
            <person name="Hensch T.K."/>
            <person name="Hirokawa N."/>
            <person name="Hill D."/>
            <person name="Huminiecki L."/>
            <person name="Iacono M."/>
            <person name="Ikeo K."/>
            <person name="Iwama A."/>
            <person name="Ishikawa T."/>
            <person name="Jakt M."/>
            <person name="Kanapin A."/>
            <person name="Katoh M."/>
            <person name="Kawasawa Y."/>
            <person name="Kelso J."/>
            <person name="Kitamura H."/>
            <person name="Kitano H."/>
            <person name="Kollias G."/>
            <person name="Krishnan S.P."/>
            <person name="Kruger A."/>
            <person name="Kummerfeld S.K."/>
            <person name="Kurochkin I.V."/>
            <person name="Lareau L.F."/>
            <person name="Lazarevic D."/>
            <person name="Lipovich L."/>
            <person name="Liu J."/>
            <person name="Liuni S."/>
            <person name="McWilliam S."/>
            <person name="Madan Babu M."/>
            <person name="Madera M."/>
            <person name="Marchionni L."/>
            <person name="Matsuda H."/>
            <person name="Matsuzawa S."/>
            <person name="Miki H."/>
            <person name="Mignone F."/>
            <person name="Miyake S."/>
            <person name="Morris K."/>
            <person name="Mottagui-Tabar S."/>
            <person name="Mulder N."/>
            <person name="Nakano N."/>
            <person name="Nakauchi H."/>
            <person name="Ng P."/>
            <person name="Nilsson R."/>
            <person name="Nishiguchi S."/>
            <person name="Nishikawa S."/>
            <person name="Nori F."/>
            <person name="Ohara O."/>
            <person name="Okazaki Y."/>
            <person name="Orlando V."/>
            <person name="Pang K.C."/>
            <person name="Pavan W.J."/>
            <person name="Pavesi G."/>
            <person name="Pesole G."/>
            <person name="Petrovsky N."/>
            <person name="Piazza S."/>
            <person name="Reed J."/>
            <person name="Reid J.F."/>
            <person name="Ring B.Z."/>
            <person name="Ringwald M."/>
            <person name="Rost B."/>
            <person name="Ruan Y."/>
            <person name="Salzberg S.L."/>
            <person name="Sandelin A."/>
            <person name="Schneider C."/>
            <person name="Schoenbach C."/>
            <person name="Sekiguchi K."/>
            <person name="Semple C.A."/>
            <person name="Seno S."/>
            <person name="Sessa L."/>
            <person name="Sheng Y."/>
            <person name="Shibata Y."/>
            <person name="Shimada H."/>
            <person name="Shimada K."/>
            <person name="Silva D."/>
            <person name="Sinclair B."/>
            <person name="Sperling S."/>
            <person name="Stupka E."/>
            <person name="Sugiura K."/>
            <person name="Sultana R."/>
            <person name="Takenaka Y."/>
            <person name="Taki K."/>
            <person name="Tammoja K."/>
            <person name="Tan S.L."/>
            <person name="Tang S."/>
            <person name="Taylor M.S."/>
            <person name="Tegner J."/>
            <person name="Teichmann S.A."/>
            <person name="Ueda H.R."/>
            <person name="van Nimwegen E."/>
            <person name="Verardo R."/>
            <person name="Wei C.L."/>
            <person name="Yagi K."/>
            <person name="Yamanishi H."/>
            <person name="Zabarovsky E."/>
            <person name="Zhu S."/>
            <person name="Zimmer A."/>
            <person name="Hide W."/>
            <person name="Bult C."/>
            <person name="Grimmond S.M."/>
            <person name="Teasdale R.D."/>
            <person name="Liu E.T."/>
            <person name="Brusic V."/>
            <person name="Quackenbush J."/>
            <person name="Wahlestedt C."/>
            <person name="Mattick J.S."/>
            <person name="Hume D.A."/>
            <person name="Kai C."/>
            <person name="Sasaki D."/>
            <person name="Tomaru Y."/>
            <person name="Fukuda S."/>
            <person name="Kanamori-Katayama M."/>
            <person name="Suzuki M."/>
            <person name="Aoki J."/>
            <person name="Arakawa T."/>
            <person name="Iida J."/>
            <person name="Imamura K."/>
            <person name="Itoh M."/>
            <person name="Kato T."/>
            <person name="Kawaji H."/>
            <person name="Kawagashira N."/>
            <person name="Kawashima T."/>
            <person name="Kojima M."/>
            <person name="Kondo S."/>
            <person name="Konno H."/>
            <person name="Nakano K."/>
            <person name="Ninomiya N."/>
            <person name="Nishio T."/>
            <person name="Okada M."/>
            <person name="Plessy C."/>
            <person name="Shibata K."/>
            <person name="Shiraki T."/>
            <person name="Suzuki S."/>
            <person name="Tagami M."/>
            <person name="Waki K."/>
            <person name="Watahiki A."/>
            <person name="Okamura-Oho Y."/>
            <person name="Suzuki H."/>
            <person name="Kawai J."/>
            <person name="Hayashizaki Y."/>
        </authorList>
    </citation>
    <scope>NUCLEOTIDE SEQUENCE [LARGE SCALE MRNA]</scope>
    <source>
        <strain>C57BL/6J</strain>
        <tissue>Embryonic liver</tissue>
    </source>
</reference>
<reference key="4">
    <citation type="journal article" date="2004" name="Genome Res.">
        <title>The status, quality, and expansion of the NIH full-length cDNA project: the Mammalian Gene Collection (MGC).</title>
        <authorList>
            <consortium name="The MGC Project Team"/>
        </authorList>
    </citation>
    <scope>NUCLEOTIDE SEQUENCE [LARGE SCALE MRNA]</scope>
    <source>
        <tissue>Limb</tissue>
    </source>
</reference>
<reference key="5">
    <citation type="journal article" date="2008" name="Cell Res.">
        <title>Downregulation of the Spi-1/PU.1 oncogene induces the expression of TRIM10/HERF1, a key factor required for terminal erythroid cell differentiation and survival.</title>
        <authorList>
            <person name="Blaybel R."/>
            <person name="Theoleyre O."/>
            <person name="Douablin A."/>
            <person name="Baklouti F."/>
        </authorList>
    </citation>
    <scope>FUNCTION</scope>
</reference>
<reference key="6">
    <citation type="journal article" date="2020" name="J. Cell. Mol. Med.">
        <title>Tripartite motif 10 regulates cardiac hypertrophy by targeting the PTEN/AKT pathway.</title>
        <authorList>
            <person name="Yang H."/>
            <person name="Wang X.X."/>
            <person name="Zhou C.Y."/>
            <person name="Xiao X."/>
            <person name="Tian C."/>
            <person name="Li H.H."/>
            <person name="Yin C.L."/>
            <person name="Wang H.X."/>
        </authorList>
    </citation>
    <scope>FUNCTION</scope>
    <scope>DISRUPTION PHENOTYPE</scope>
</reference>
<comment type="function">
    <text evidence="1 7 8">E3 ligase that plays an essential role in the differentiation and survival of terminal erythroid cells (PubMed:18560381). May directly bind to PTEN and promote its ubiquitination, resulting in its proteasomal degradation and activation of hypertrophic signaling (PubMed:32343488). In addition, plays a role in immune response regulation by repressing the phosphorylation of STAT1 and STAT2 in the interferon/JAK/STAT signaling pathway independent of its E3 ligase activity. Mechanistically, interacts with the intracellular domain of IFNAR1 and thereby inhibits the association between TYK2 and IFNAR1 (By similarity).</text>
</comment>
<comment type="subunit">
    <text evidence="1">Interacts with IFNAR1; this interaction prevents association of IFNAR1 with TYK2.</text>
</comment>
<comment type="subcellular location">
    <subcellularLocation>
        <location evidence="1">Cytoplasm</location>
    </subcellularLocation>
</comment>
<comment type="tissue specificity">
    <text evidence="6">Expressed in embryonic liver.</text>
</comment>
<comment type="disruption phenotype">
    <text evidence="8">Deletion mice inhibit hypertrophic remodeling after transverse aortic constriction surgery.</text>
</comment>
<comment type="similarity">
    <text evidence="9">Belongs to the TRIM/RBCC family.</text>
</comment>
<keyword id="KW-0175">Coiled coil</keyword>
<keyword id="KW-0963">Cytoplasm</keyword>
<keyword id="KW-0479">Metal-binding</keyword>
<keyword id="KW-1185">Reference proteome</keyword>
<keyword id="KW-0862">Zinc</keyword>
<keyword id="KW-0863">Zinc-finger</keyword>
<protein>
    <recommendedName>
        <fullName>Tripartite motif-containing protein 10</fullName>
    </recommendedName>
    <alternativeName>
        <fullName>Hematopoietic RING finger 1</fullName>
    </alternativeName>
    <alternativeName>
        <fullName>RING finger protein 9</fullName>
    </alternativeName>
</protein>